<dbReference type="EMBL" id="BA000023">
    <property type="protein sequence ID" value="BAB65267.1"/>
    <property type="molecule type" value="Genomic_DNA"/>
</dbReference>
<dbReference type="SMR" id="Q975Y1"/>
<dbReference type="STRING" id="273063.STK_02970"/>
<dbReference type="KEGG" id="sto:STK_02970"/>
<dbReference type="PATRIC" id="fig|273063.9.peg.351"/>
<dbReference type="eggNOG" id="arCOG00415">
    <property type="taxonomic scope" value="Archaea"/>
</dbReference>
<dbReference type="BRENDA" id="3.6.4.B7">
    <property type="organism ID" value="15396"/>
</dbReference>
<dbReference type="Proteomes" id="UP000001015">
    <property type="component" value="Chromosome"/>
</dbReference>
<dbReference type="GO" id="GO:0005524">
    <property type="term" value="F:ATP binding"/>
    <property type="evidence" value="ECO:0007669"/>
    <property type="project" value="UniProtKB-UniRule"/>
</dbReference>
<dbReference type="GO" id="GO:0016887">
    <property type="term" value="F:ATP hydrolysis activity"/>
    <property type="evidence" value="ECO:0007669"/>
    <property type="project" value="InterPro"/>
</dbReference>
<dbReference type="GO" id="GO:0140664">
    <property type="term" value="F:ATP-dependent DNA damage sensor activity"/>
    <property type="evidence" value="ECO:0007669"/>
    <property type="project" value="InterPro"/>
</dbReference>
<dbReference type="GO" id="GO:0003684">
    <property type="term" value="F:damaged DNA binding"/>
    <property type="evidence" value="ECO:0007669"/>
    <property type="project" value="UniProtKB-UniRule"/>
</dbReference>
<dbReference type="GO" id="GO:0006310">
    <property type="term" value="P:DNA recombination"/>
    <property type="evidence" value="ECO:0007669"/>
    <property type="project" value="UniProtKB-UniRule"/>
</dbReference>
<dbReference type="GO" id="GO:0006281">
    <property type="term" value="P:DNA repair"/>
    <property type="evidence" value="ECO:0007669"/>
    <property type="project" value="UniProtKB-UniRule"/>
</dbReference>
<dbReference type="CDD" id="cd19515">
    <property type="entry name" value="archRadA"/>
    <property type="match status" value="1"/>
</dbReference>
<dbReference type="FunFam" id="3.40.50.300:FF:002052">
    <property type="entry name" value="DNA repair protein RAD51 homolog"/>
    <property type="match status" value="1"/>
</dbReference>
<dbReference type="Gene3D" id="1.10.150.20">
    <property type="entry name" value="5' to 3' exonuclease, C-terminal subdomain"/>
    <property type="match status" value="1"/>
</dbReference>
<dbReference type="Gene3D" id="3.40.50.300">
    <property type="entry name" value="P-loop containing nucleotide triphosphate hydrolases"/>
    <property type="match status" value="1"/>
</dbReference>
<dbReference type="HAMAP" id="MF_00348">
    <property type="entry name" value="RadA_arch"/>
    <property type="match status" value="1"/>
</dbReference>
<dbReference type="InterPro" id="IPR003593">
    <property type="entry name" value="AAA+_ATPase"/>
</dbReference>
<dbReference type="InterPro" id="IPR013632">
    <property type="entry name" value="DNA_recomb/repair_Rad51_C"/>
</dbReference>
<dbReference type="InterPro" id="IPR011938">
    <property type="entry name" value="DNA_recomb/repair_RadA"/>
</dbReference>
<dbReference type="InterPro" id="IPR016467">
    <property type="entry name" value="DNA_recomb/repair_RecA-like"/>
</dbReference>
<dbReference type="InterPro" id="IPR010995">
    <property type="entry name" value="DNA_repair_Rad51/TF_NusA_a-hlx"/>
</dbReference>
<dbReference type="InterPro" id="IPR027417">
    <property type="entry name" value="P-loop_NTPase"/>
</dbReference>
<dbReference type="InterPro" id="IPR020588">
    <property type="entry name" value="RecA_ATP-bd"/>
</dbReference>
<dbReference type="InterPro" id="IPR020587">
    <property type="entry name" value="RecA_monomer-monomer_interface"/>
</dbReference>
<dbReference type="NCBIfam" id="NF003301">
    <property type="entry name" value="PRK04301.1"/>
    <property type="match status" value="1"/>
</dbReference>
<dbReference type="NCBIfam" id="TIGR02236">
    <property type="entry name" value="recomb_radA"/>
    <property type="match status" value="1"/>
</dbReference>
<dbReference type="PANTHER" id="PTHR22942:SF30">
    <property type="entry name" value="MEIOTIC RECOMBINATION PROTEIN DMC1_LIM15 HOMOLOG"/>
    <property type="match status" value="1"/>
</dbReference>
<dbReference type="PANTHER" id="PTHR22942">
    <property type="entry name" value="RECA/RAD51/RADA DNA STRAND-PAIRING FAMILY MEMBER"/>
    <property type="match status" value="1"/>
</dbReference>
<dbReference type="Pfam" id="PF14520">
    <property type="entry name" value="HHH_5"/>
    <property type="match status" value="1"/>
</dbReference>
<dbReference type="Pfam" id="PF08423">
    <property type="entry name" value="Rad51"/>
    <property type="match status" value="1"/>
</dbReference>
<dbReference type="PIRSF" id="PIRSF005856">
    <property type="entry name" value="Rad51"/>
    <property type="match status" value="1"/>
</dbReference>
<dbReference type="SMART" id="SM00382">
    <property type="entry name" value="AAA"/>
    <property type="match status" value="1"/>
</dbReference>
<dbReference type="SUPFAM" id="SSF52540">
    <property type="entry name" value="P-loop containing nucleoside triphosphate hydrolases"/>
    <property type="match status" value="1"/>
</dbReference>
<dbReference type="SUPFAM" id="SSF47794">
    <property type="entry name" value="Rad51 N-terminal domain-like"/>
    <property type="match status" value="1"/>
</dbReference>
<dbReference type="PROSITE" id="PS50162">
    <property type="entry name" value="RECA_2"/>
    <property type="match status" value="1"/>
</dbReference>
<dbReference type="PROSITE" id="PS50163">
    <property type="entry name" value="RECA_3"/>
    <property type="match status" value="1"/>
</dbReference>
<evidence type="ECO:0000255" key="1">
    <source>
        <dbReference type="HAMAP-Rule" id="MF_00348"/>
    </source>
</evidence>
<protein>
    <recommendedName>
        <fullName evidence="1">DNA repair and recombination protein RadA</fullName>
    </recommendedName>
</protein>
<proteinExistence type="inferred from homology"/>
<feature type="chain" id="PRO_0000150108" description="DNA repair and recombination protein RadA">
    <location>
        <begin position="1"/>
        <end position="324"/>
    </location>
</feature>
<feature type="binding site" evidence="1">
    <location>
        <begin position="114"/>
        <end position="121"/>
    </location>
    <ligand>
        <name>ATP</name>
        <dbReference type="ChEBI" id="CHEBI:30616"/>
    </ligand>
</feature>
<keyword id="KW-0067">ATP-binding</keyword>
<keyword id="KW-0227">DNA damage</keyword>
<keyword id="KW-0233">DNA recombination</keyword>
<keyword id="KW-0238">DNA-binding</keyword>
<keyword id="KW-0547">Nucleotide-binding</keyword>
<keyword id="KW-1185">Reference proteome</keyword>
<name>RADA_SULTO</name>
<comment type="function">
    <text evidence="1">Involved in DNA repair and in homologous recombination. Binds and assemble on single-stranded DNA to form a nucleoprotein filament. Hydrolyzes ATP in a ssDNA-dependent manner and promotes DNA strand exchange between homologous DNA molecules.</text>
</comment>
<comment type="similarity">
    <text evidence="1">Belongs to the eukaryotic RecA-like protein family.</text>
</comment>
<sequence length="324" mass="35530">MNDMSSDGKKVKSLSDLPGVGQSILNKLIEAGYSSLEAVAVASPQDLSVAAGIPLTTAQRIIKEAREALDIRFKTALEVKKERINTKKITTGSQALDGLLGGGIETRTMTELFGEFGSGKTQLCHQLSVNVQLPLEKGGLGGKAVYIDTEGTFRWERIEAMSKAIGLEPDSAMNNIYYMRAINSDHQMAIVDDLQELISKDPAIKLVIVDSVTSHFRAEFPGRENLAVRQQKLNKHLHQLVRLAEMYDLAVIITNQVMARPDMFYGDPTVAVGGHTLYHVPGIRVQLKKSRGNKRIARIVDAPHLPEGEVVFAITEEGVRDAEE</sequence>
<reference key="1">
    <citation type="journal article" date="2001" name="DNA Res.">
        <title>Complete genome sequence of an aerobic thermoacidophilic Crenarchaeon, Sulfolobus tokodaii strain7.</title>
        <authorList>
            <person name="Kawarabayasi Y."/>
            <person name="Hino Y."/>
            <person name="Horikawa H."/>
            <person name="Jin-no K."/>
            <person name="Takahashi M."/>
            <person name="Sekine M."/>
            <person name="Baba S."/>
            <person name="Ankai A."/>
            <person name="Kosugi H."/>
            <person name="Hosoyama A."/>
            <person name="Fukui S."/>
            <person name="Nagai Y."/>
            <person name="Nishijima K."/>
            <person name="Otsuka R."/>
            <person name="Nakazawa H."/>
            <person name="Takamiya M."/>
            <person name="Kato Y."/>
            <person name="Yoshizawa T."/>
            <person name="Tanaka T."/>
            <person name="Kudoh Y."/>
            <person name="Yamazaki J."/>
            <person name="Kushida N."/>
            <person name="Oguchi A."/>
            <person name="Aoki K."/>
            <person name="Masuda S."/>
            <person name="Yanagii M."/>
            <person name="Nishimura M."/>
            <person name="Yamagishi A."/>
            <person name="Oshima T."/>
            <person name="Kikuchi H."/>
        </authorList>
    </citation>
    <scope>NUCLEOTIDE SEQUENCE [LARGE SCALE GENOMIC DNA]</scope>
    <source>
        <strain>DSM 16993 / JCM 10545 / NBRC 100140 / 7</strain>
    </source>
</reference>
<gene>
    <name evidence="1" type="primary">radA</name>
    <name type="ordered locus">STK_02970</name>
</gene>
<accession>Q975Y1</accession>
<organism>
    <name type="scientific">Sulfurisphaera tokodaii (strain DSM 16993 / JCM 10545 / NBRC 100140 / 7)</name>
    <name type="common">Sulfolobus tokodaii</name>
    <dbReference type="NCBI Taxonomy" id="273063"/>
    <lineage>
        <taxon>Archaea</taxon>
        <taxon>Thermoproteota</taxon>
        <taxon>Thermoprotei</taxon>
        <taxon>Sulfolobales</taxon>
        <taxon>Sulfolobaceae</taxon>
        <taxon>Sulfurisphaera</taxon>
    </lineage>
</organism>